<gene>
    <name evidence="1" type="primary">rplR</name>
    <name type="ordered locus">Rpic_3281</name>
</gene>
<organism>
    <name type="scientific">Ralstonia pickettii (strain 12J)</name>
    <dbReference type="NCBI Taxonomy" id="402626"/>
    <lineage>
        <taxon>Bacteria</taxon>
        <taxon>Pseudomonadati</taxon>
        <taxon>Pseudomonadota</taxon>
        <taxon>Betaproteobacteria</taxon>
        <taxon>Burkholderiales</taxon>
        <taxon>Burkholderiaceae</taxon>
        <taxon>Ralstonia</taxon>
    </lineage>
</organism>
<evidence type="ECO:0000255" key="1">
    <source>
        <dbReference type="HAMAP-Rule" id="MF_01337"/>
    </source>
</evidence>
<evidence type="ECO:0000305" key="2"/>
<sequence length="118" mass="12749">MNKNDSRLRRARQTRLKIAELSVARLAVHRTNLHIYAQVFSEDGTKVLASASTAEAEVRKELNGNGGNTAAATLVGKRIAEKAKAAGIEAVAFDRSGFRYHGRVKALADAAREAGLKF</sequence>
<dbReference type="EMBL" id="CP001068">
    <property type="protein sequence ID" value="ACD28403.1"/>
    <property type="molecule type" value="Genomic_DNA"/>
</dbReference>
<dbReference type="SMR" id="B2UEK3"/>
<dbReference type="STRING" id="402626.Rpic_3281"/>
<dbReference type="KEGG" id="rpi:Rpic_3281"/>
<dbReference type="eggNOG" id="COG0256">
    <property type="taxonomic scope" value="Bacteria"/>
</dbReference>
<dbReference type="HOGENOM" id="CLU_098841_0_1_4"/>
<dbReference type="GO" id="GO:0022625">
    <property type="term" value="C:cytosolic large ribosomal subunit"/>
    <property type="evidence" value="ECO:0007669"/>
    <property type="project" value="TreeGrafter"/>
</dbReference>
<dbReference type="GO" id="GO:0008097">
    <property type="term" value="F:5S rRNA binding"/>
    <property type="evidence" value="ECO:0007669"/>
    <property type="project" value="TreeGrafter"/>
</dbReference>
<dbReference type="GO" id="GO:0003735">
    <property type="term" value="F:structural constituent of ribosome"/>
    <property type="evidence" value="ECO:0007669"/>
    <property type="project" value="InterPro"/>
</dbReference>
<dbReference type="GO" id="GO:0006412">
    <property type="term" value="P:translation"/>
    <property type="evidence" value="ECO:0007669"/>
    <property type="project" value="UniProtKB-UniRule"/>
</dbReference>
<dbReference type="CDD" id="cd00432">
    <property type="entry name" value="Ribosomal_L18_L5e"/>
    <property type="match status" value="1"/>
</dbReference>
<dbReference type="FunFam" id="3.30.420.100:FF:000001">
    <property type="entry name" value="50S ribosomal protein L18"/>
    <property type="match status" value="1"/>
</dbReference>
<dbReference type="Gene3D" id="3.30.420.100">
    <property type="match status" value="1"/>
</dbReference>
<dbReference type="HAMAP" id="MF_01337_B">
    <property type="entry name" value="Ribosomal_uL18_B"/>
    <property type="match status" value="1"/>
</dbReference>
<dbReference type="InterPro" id="IPR004389">
    <property type="entry name" value="Ribosomal_uL18_bac-type"/>
</dbReference>
<dbReference type="InterPro" id="IPR005484">
    <property type="entry name" value="Ribosomal_uL18_bac/euk"/>
</dbReference>
<dbReference type="NCBIfam" id="TIGR00060">
    <property type="entry name" value="L18_bact"/>
    <property type="match status" value="1"/>
</dbReference>
<dbReference type="PANTHER" id="PTHR12899">
    <property type="entry name" value="39S RIBOSOMAL PROTEIN L18, MITOCHONDRIAL"/>
    <property type="match status" value="1"/>
</dbReference>
<dbReference type="PANTHER" id="PTHR12899:SF3">
    <property type="entry name" value="LARGE RIBOSOMAL SUBUNIT PROTEIN UL18M"/>
    <property type="match status" value="1"/>
</dbReference>
<dbReference type="Pfam" id="PF00861">
    <property type="entry name" value="Ribosomal_L18p"/>
    <property type="match status" value="1"/>
</dbReference>
<dbReference type="SUPFAM" id="SSF53137">
    <property type="entry name" value="Translational machinery components"/>
    <property type="match status" value="1"/>
</dbReference>
<comment type="function">
    <text evidence="1">This is one of the proteins that bind and probably mediate the attachment of the 5S RNA into the large ribosomal subunit, where it forms part of the central protuberance.</text>
</comment>
<comment type="subunit">
    <text evidence="1">Part of the 50S ribosomal subunit; part of the 5S rRNA/L5/L18/L25 subcomplex. Contacts the 5S and 23S rRNAs.</text>
</comment>
<comment type="similarity">
    <text evidence="1">Belongs to the universal ribosomal protein uL18 family.</text>
</comment>
<reference key="1">
    <citation type="submission" date="2008-05" db="EMBL/GenBank/DDBJ databases">
        <title>Complete sequence of chromosome 1 of Ralstonia pickettii 12J.</title>
        <authorList>
            <person name="Lucas S."/>
            <person name="Copeland A."/>
            <person name="Lapidus A."/>
            <person name="Glavina del Rio T."/>
            <person name="Dalin E."/>
            <person name="Tice H."/>
            <person name="Bruce D."/>
            <person name="Goodwin L."/>
            <person name="Pitluck S."/>
            <person name="Meincke L."/>
            <person name="Brettin T."/>
            <person name="Detter J.C."/>
            <person name="Han C."/>
            <person name="Kuske C.R."/>
            <person name="Schmutz J."/>
            <person name="Larimer F."/>
            <person name="Land M."/>
            <person name="Hauser L."/>
            <person name="Kyrpides N."/>
            <person name="Mikhailova N."/>
            <person name="Marsh T."/>
            <person name="Richardson P."/>
        </authorList>
    </citation>
    <scope>NUCLEOTIDE SEQUENCE [LARGE SCALE GENOMIC DNA]</scope>
    <source>
        <strain>12J</strain>
    </source>
</reference>
<proteinExistence type="inferred from homology"/>
<feature type="chain" id="PRO_1000142706" description="Large ribosomal subunit protein uL18">
    <location>
        <begin position="1"/>
        <end position="118"/>
    </location>
</feature>
<accession>B2UEK3</accession>
<keyword id="KW-0687">Ribonucleoprotein</keyword>
<keyword id="KW-0689">Ribosomal protein</keyword>
<keyword id="KW-0694">RNA-binding</keyword>
<keyword id="KW-0699">rRNA-binding</keyword>
<protein>
    <recommendedName>
        <fullName evidence="1">Large ribosomal subunit protein uL18</fullName>
    </recommendedName>
    <alternativeName>
        <fullName evidence="2">50S ribosomal protein L18</fullName>
    </alternativeName>
</protein>
<name>RL18_RALPJ</name>